<accession>A7MJ02</accession>
<dbReference type="EC" id="2.3.1.47" evidence="1"/>
<dbReference type="EMBL" id="CP000783">
    <property type="protein sequence ID" value="ABU77816.1"/>
    <property type="molecule type" value="Genomic_DNA"/>
</dbReference>
<dbReference type="RefSeq" id="WP_012125306.1">
    <property type="nucleotide sequence ID" value="NC_009778.1"/>
</dbReference>
<dbReference type="SMR" id="A7MJ02"/>
<dbReference type="KEGG" id="esa:ESA_02571"/>
<dbReference type="PATRIC" id="fig|290339.8.peg.2292"/>
<dbReference type="HOGENOM" id="CLU_015846_11_2_6"/>
<dbReference type="UniPathway" id="UPA00078"/>
<dbReference type="Proteomes" id="UP000000260">
    <property type="component" value="Chromosome"/>
</dbReference>
<dbReference type="GO" id="GO:0008710">
    <property type="term" value="F:8-amino-7-oxononanoate synthase activity"/>
    <property type="evidence" value="ECO:0007669"/>
    <property type="project" value="UniProtKB-UniRule"/>
</dbReference>
<dbReference type="GO" id="GO:0030170">
    <property type="term" value="F:pyridoxal phosphate binding"/>
    <property type="evidence" value="ECO:0007669"/>
    <property type="project" value="UniProtKB-UniRule"/>
</dbReference>
<dbReference type="GO" id="GO:0009102">
    <property type="term" value="P:biotin biosynthetic process"/>
    <property type="evidence" value="ECO:0007669"/>
    <property type="project" value="UniProtKB-UniRule"/>
</dbReference>
<dbReference type="CDD" id="cd06454">
    <property type="entry name" value="KBL_like"/>
    <property type="match status" value="1"/>
</dbReference>
<dbReference type="Gene3D" id="3.90.1150.10">
    <property type="entry name" value="Aspartate Aminotransferase, domain 1"/>
    <property type="match status" value="1"/>
</dbReference>
<dbReference type="Gene3D" id="3.40.640.10">
    <property type="entry name" value="Type I PLP-dependent aspartate aminotransferase-like (Major domain)"/>
    <property type="match status" value="1"/>
</dbReference>
<dbReference type="HAMAP" id="MF_01693">
    <property type="entry name" value="BioF_aminotrans_2"/>
    <property type="match status" value="1"/>
</dbReference>
<dbReference type="InterPro" id="IPR001917">
    <property type="entry name" value="Aminotrans_II_pyridoxalP_BS"/>
</dbReference>
<dbReference type="InterPro" id="IPR004839">
    <property type="entry name" value="Aminotransferase_I/II_large"/>
</dbReference>
<dbReference type="InterPro" id="IPR050087">
    <property type="entry name" value="AON_synthase_class-II"/>
</dbReference>
<dbReference type="InterPro" id="IPR004723">
    <property type="entry name" value="AONS_Archaea/Proteobacteria"/>
</dbReference>
<dbReference type="InterPro" id="IPR022834">
    <property type="entry name" value="AONS_Proteobacteria"/>
</dbReference>
<dbReference type="InterPro" id="IPR015424">
    <property type="entry name" value="PyrdxlP-dep_Trfase"/>
</dbReference>
<dbReference type="InterPro" id="IPR015421">
    <property type="entry name" value="PyrdxlP-dep_Trfase_major"/>
</dbReference>
<dbReference type="InterPro" id="IPR015422">
    <property type="entry name" value="PyrdxlP-dep_Trfase_small"/>
</dbReference>
<dbReference type="NCBIfam" id="TIGR00858">
    <property type="entry name" value="bioF"/>
    <property type="match status" value="1"/>
</dbReference>
<dbReference type="PANTHER" id="PTHR13693:SF100">
    <property type="entry name" value="8-AMINO-7-OXONONANOATE SYNTHASE"/>
    <property type="match status" value="1"/>
</dbReference>
<dbReference type="PANTHER" id="PTHR13693">
    <property type="entry name" value="CLASS II AMINOTRANSFERASE/8-AMINO-7-OXONONANOATE SYNTHASE"/>
    <property type="match status" value="1"/>
</dbReference>
<dbReference type="Pfam" id="PF00155">
    <property type="entry name" value="Aminotran_1_2"/>
    <property type="match status" value="1"/>
</dbReference>
<dbReference type="SUPFAM" id="SSF53383">
    <property type="entry name" value="PLP-dependent transferases"/>
    <property type="match status" value="1"/>
</dbReference>
<dbReference type="PROSITE" id="PS00599">
    <property type="entry name" value="AA_TRANSFER_CLASS_2"/>
    <property type="match status" value="1"/>
</dbReference>
<gene>
    <name evidence="1" type="primary">bioF</name>
    <name type="ordered locus">ESA_02571</name>
</gene>
<evidence type="ECO:0000255" key="1">
    <source>
        <dbReference type="HAMAP-Rule" id="MF_01693"/>
    </source>
</evidence>
<proteinExistence type="inferred from homology"/>
<feature type="chain" id="PRO_0000380987" description="8-amino-7-oxononanoate synthase">
    <location>
        <begin position="1"/>
        <end position="383"/>
    </location>
</feature>
<feature type="binding site" evidence="1">
    <location>
        <position position="21"/>
    </location>
    <ligand>
        <name>substrate</name>
    </ligand>
</feature>
<feature type="binding site" evidence="1">
    <location>
        <begin position="108"/>
        <end position="109"/>
    </location>
    <ligand>
        <name>pyridoxal 5'-phosphate</name>
        <dbReference type="ChEBI" id="CHEBI:597326"/>
    </ligand>
</feature>
<feature type="binding site" evidence="1">
    <location>
        <position position="133"/>
    </location>
    <ligand>
        <name>substrate</name>
    </ligand>
</feature>
<feature type="binding site" evidence="1">
    <location>
        <position position="179"/>
    </location>
    <ligand>
        <name>pyridoxal 5'-phosphate</name>
        <dbReference type="ChEBI" id="CHEBI:597326"/>
    </ligand>
</feature>
<feature type="binding site" evidence="1">
    <location>
        <position position="207"/>
    </location>
    <ligand>
        <name>pyridoxal 5'-phosphate</name>
        <dbReference type="ChEBI" id="CHEBI:597326"/>
    </ligand>
</feature>
<feature type="binding site" evidence="1">
    <location>
        <position position="233"/>
    </location>
    <ligand>
        <name>pyridoxal 5'-phosphate</name>
        <dbReference type="ChEBI" id="CHEBI:597326"/>
    </ligand>
</feature>
<feature type="binding site" evidence="1">
    <location>
        <position position="350"/>
    </location>
    <ligand>
        <name>substrate</name>
    </ligand>
</feature>
<feature type="modified residue" description="N6-(pyridoxal phosphate)lysine" evidence="1">
    <location>
        <position position="236"/>
    </location>
</feature>
<reference key="1">
    <citation type="journal article" date="2010" name="PLoS ONE">
        <title>Genome sequence of Cronobacter sakazakii BAA-894 and comparative genomic hybridization analysis with other Cronobacter species.</title>
        <authorList>
            <person name="Kucerova E."/>
            <person name="Clifton S.W."/>
            <person name="Xia X.Q."/>
            <person name="Long F."/>
            <person name="Porwollik S."/>
            <person name="Fulton L."/>
            <person name="Fronick C."/>
            <person name="Minx P."/>
            <person name="Kyung K."/>
            <person name="Warren W."/>
            <person name="Fulton R."/>
            <person name="Feng D."/>
            <person name="Wollam A."/>
            <person name="Shah N."/>
            <person name="Bhonagiri V."/>
            <person name="Nash W.E."/>
            <person name="Hallsworth-Pepin K."/>
            <person name="Wilson R.K."/>
            <person name="McClelland M."/>
            <person name="Forsythe S.J."/>
        </authorList>
    </citation>
    <scope>NUCLEOTIDE SEQUENCE [LARGE SCALE GENOMIC DNA]</scope>
    <source>
        <strain>ATCC BAA-894</strain>
    </source>
</reference>
<name>BIOF_CROS8</name>
<protein>
    <recommendedName>
        <fullName evidence="1">8-amino-7-oxononanoate synthase</fullName>
        <shortName evidence="1">AONS</shortName>
        <ecNumber evidence="1">2.3.1.47</ecNumber>
    </recommendedName>
    <alternativeName>
        <fullName evidence="1">7-keto-8-amino-pelargonic acid synthase</fullName>
        <shortName evidence="1">7-KAP synthase</shortName>
        <shortName evidence="1">KAPA synthase</shortName>
    </alternativeName>
    <alternativeName>
        <fullName evidence="1">8-amino-7-ketopelargonate synthase</fullName>
    </alternativeName>
</protein>
<sequence>MTWQARIDAALRAREASHSLRRRVVCTPAPGGALVHQGVRYRNFSGNDYLGLSQHPALIAAWQQGAQTYGVGSGASGHVSGYSDAHQSLENALAHWLGFDRALLFISGFAANQAVVAALMQQSDRILADRLSHASLLEAASHSPATLRRFAHNDSGALAALLGKPCDGLTLVFTEGVFSMDGDSAPLADIAGIAQGAQTLLMVDDAHGVGVQGREGRGSCDVAGIRPDLLLVTFGKAFGLSGAALLCSAPMADYLLQTARHLIYSTAMPAAQACALNAALTVIREGDDLRARLARNIARFRAGAASLPLTLADSQTAIQPLIVGENSAALTLAEKLRERGCWVTAIRPPTVPAGTARLRLTLSAAHQDEDIDALLEALYDGCR</sequence>
<keyword id="KW-0093">Biotin biosynthesis</keyword>
<keyword id="KW-0663">Pyridoxal phosphate</keyword>
<keyword id="KW-1185">Reference proteome</keyword>
<keyword id="KW-0808">Transferase</keyword>
<organism>
    <name type="scientific">Cronobacter sakazakii (strain ATCC BAA-894)</name>
    <name type="common">Enterobacter sakazakii</name>
    <dbReference type="NCBI Taxonomy" id="290339"/>
    <lineage>
        <taxon>Bacteria</taxon>
        <taxon>Pseudomonadati</taxon>
        <taxon>Pseudomonadota</taxon>
        <taxon>Gammaproteobacteria</taxon>
        <taxon>Enterobacterales</taxon>
        <taxon>Enterobacteriaceae</taxon>
        <taxon>Cronobacter</taxon>
    </lineage>
</organism>
<comment type="function">
    <text evidence="1">Catalyzes the decarboxylative condensation of pimeloyl-[acyl-carrier protein] and L-alanine to produce 8-amino-7-oxononanoate (AON), [acyl-carrier protein], and carbon dioxide.</text>
</comment>
<comment type="catalytic activity">
    <reaction evidence="1">
        <text>6-carboxyhexanoyl-[ACP] + L-alanine + H(+) = (8S)-8-amino-7-oxononanoate + holo-[ACP] + CO2</text>
        <dbReference type="Rhea" id="RHEA:42288"/>
        <dbReference type="Rhea" id="RHEA-COMP:9685"/>
        <dbReference type="Rhea" id="RHEA-COMP:9955"/>
        <dbReference type="ChEBI" id="CHEBI:15378"/>
        <dbReference type="ChEBI" id="CHEBI:16526"/>
        <dbReference type="ChEBI" id="CHEBI:57972"/>
        <dbReference type="ChEBI" id="CHEBI:64479"/>
        <dbReference type="ChEBI" id="CHEBI:78846"/>
        <dbReference type="ChEBI" id="CHEBI:149468"/>
        <dbReference type="EC" id="2.3.1.47"/>
    </reaction>
</comment>
<comment type="cofactor">
    <cofactor evidence="1">
        <name>pyridoxal 5'-phosphate</name>
        <dbReference type="ChEBI" id="CHEBI:597326"/>
    </cofactor>
</comment>
<comment type="pathway">
    <text evidence="1">Cofactor biosynthesis; biotin biosynthesis.</text>
</comment>
<comment type="subunit">
    <text evidence="1">Homodimer.</text>
</comment>
<comment type="similarity">
    <text evidence="1">Belongs to the class-II pyridoxal-phosphate-dependent aminotransferase family. BioF subfamily.</text>
</comment>